<reference key="1">
    <citation type="submission" date="2009-06" db="EMBL/GenBank/DDBJ databases">
        <title>Complete sequence of Desulfovibrio salexigens DSM 2638.</title>
        <authorList>
            <consortium name="US DOE Joint Genome Institute"/>
            <person name="Lucas S."/>
            <person name="Copeland A."/>
            <person name="Lapidus A."/>
            <person name="Glavina del Rio T."/>
            <person name="Tice H."/>
            <person name="Bruce D."/>
            <person name="Goodwin L."/>
            <person name="Pitluck S."/>
            <person name="Munk A.C."/>
            <person name="Brettin T."/>
            <person name="Detter J.C."/>
            <person name="Han C."/>
            <person name="Tapia R."/>
            <person name="Larimer F."/>
            <person name="Land M."/>
            <person name="Hauser L."/>
            <person name="Kyrpides N."/>
            <person name="Anderson I."/>
            <person name="Wall J.D."/>
            <person name="Arkin A.P."/>
            <person name="Dehal P."/>
            <person name="Chivian D."/>
            <person name="Giles B."/>
            <person name="Hazen T.C."/>
        </authorList>
    </citation>
    <scope>NUCLEOTIDE SEQUENCE [LARGE SCALE GENOMIC DNA]</scope>
    <source>
        <strain>ATCC 14822 / DSM 2638 / NCIMB 8403 / VKM B-1763</strain>
    </source>
</reference>
<keyword id="KW-0001">2Fe-2S</keyword>
<keyword id="KW-0028">Amino-acid biosynthesis</keyword>
<keyword id="KW-0100">Branched-chain amino acid biosynthesis</keyword>
<keyword id="KW-0408">Iron</keyword>
<keyword id="KW-0411">Iron-sulfur</keyword>
<keyword id="KW-0456">Lyase</keyword>
<keyword id="KW-0460">Magnesium</keyword>
<keyword id="KW-0479">Metal-binding</keyword>
<keyword id="KW-1185">Reference proteome</keyword>
<comment type="function">
    <text evidence="1">Functions in the biosynthesis of branched-chain amino acids. Catalyzes the dehydration of (2R,3R)-2,3-dihydroxy-3-methylpentanoate (2,3-dihydroxy-3-methylvalerate) into 2-oxo-3-methylpentanoate (2-oxo-3-methylvalerate) and of (2R)-2,3-dihydroxy-3-methylbutanoate (2,3-dihydroxyisovalerate) into 2-oxo-3-methylbutanoate (2-oxoisovalerate), the penultimate precursor to L-isoleucine and L-valine, respectively.</text>
</comment>
<comment type="catalytic activity">
    <reaction evidence="1">
        <text>(2R)-2,3-dihydroxy-3-methylbutanoate = 3-methyl-2-oxobutanoate + H2O</text>
        <dbReference type="Rhea" id="RHEA:24809"/>
        <dbReference type="ChEBI" id="CHEBI:11851"/>
        <dbReference type="ChEBI" id="CHEBI:15377"/>
        <dbReference type="ChEBI" id="CHEBI:49072"/>
        <dbReference type="EC" id="4.2.1.9"/>
    </reaction>
    <physiologicalReaction direction="left-to-right" evidence="1">
        <dbReference type="Rhea" id="RHEA:24810"/>
    </physiologicalReaction>
</comment>
<comment type="catalytic activity">
    <reaction evidence="1">
        <text>(2R,3R)-2,3-dihydroxy-3-methylpentanoate = (S)-3-methyl-2-oxopentanoate + H2O</text>
        <dbReference type="Rhea" id="RHEA:27694"/>
        <dbReference type="ChEBI" id="CHEBI:15377"/>
        <dbReference type="ChEBI" id="CHEBI:35146"/>
        <dbReference type="ChEBI" id="CHEBI:49258"/>
        <dbReference type="EC" id="4.2.1.9"/>
    </reaction>
    <physiologicalReaction direction="left-to-right" evidence="1">
        <dbReference type="Rhea" id="RHEA:27695"/>
    </physiologicalReaction>
</comment>
<comment type="cofactor">
    <cofactor evidence="1">
        <name>[2Fe-2S] cluster</name>
        <dbReference type="ChEBI" id="CHEBI:190135"/>
    </cofactor>
    <text evidence="1">Binds 1 [2Fe-2S] cluster per subunit. This cluster acts as a Lewis acid cofactor.</text>
</comment>
<comment type="cofactor">
    <cofactor evidence="1">
        <name>Mg(2+)</name>
        <dbReference type="ChEBI" id="CHEBI:18420"/>
    </cofactor>
</comment>
<comment type="pathway">
    <text evidence="1">Amino-acid biosynthesis; L-isoleucine biosynthesis; L-isoleucine from 2-oxobutanoate: step 3/4.</text>
</comment>
<comment type="pathway">
    <text evidence="1">Amino-acid biosynthesis; L-valine biosynthesis; L-valine from pyruvate: step 3/4.</text>
</comment>
<comment type="subunit">
    <text evidence="1">Homodimer.</text>
</comment>
<comment type="similarity">
    <text evidence="1">Belongs to the IlvD/Edd family.</text>
</comment>
<feature type="chain" id="PRO_1000201773" description="Dihydroxy-acid dehydratase">
    <location>
        <begin position="1"/>
        <end position="555"/>
    </location>
</feature>
<feature type="active site" description="Proton acceptor" evidence="1">
    <location>
        <position position="470"/>
    </location>
</feature>
<feature type="binding site" evidence="1">
    <location>
        <position position="78"/>
    </location>
    <ligand>
        <name>Mg(2+)</name>
        <dbReference type="ChEBI" id="CHEBI:18420"/>
    </ligand>
</feature>
<feature type="binding site" evidence="1">
    <location>
        <position position="119"/>
    </location>
    <ligand>
        <name>[2Fe-2S] cluster</name>
        <dbReference type="ChEBI" id="CHEBI:190135"/>
    </ligand>
</feature>
<feature type="binding site" evidence="1">
    <location>
        <position position="120"/>
    </location>
    <ligand>
        <name>Mg(2+)</name>
        <dbReference type="ChEBI" id="CHEBI:18420"/>
    </ligand>
</feature>
<feature type="binding site" description="via carbamate group" evidence="1">
    <location>
        <position position="121"/>
    </location>
    <ligand>
        <name>Mg(2+)</name>
        <dbReference type="ChEBI" id="CHEBI:18420"/>
    </ligand>
</feature>
<feature type="binding site" evidence="1">
    <location>
        <position position="191"/>
    </location>
    <ligand>
        <name>[2Fe-2S] cluster</name>
        <dbReference type="ChEBI" id="CHEBI:190135"/>
    </ligand>
</feature>
<feature type="binding site" evidence="1">
    <location>
        <position position="444"/>
    </location>
    <ligand>
        <name>Mg(2+)</name>
        <dbReference type="ChEBI" id="CHEBI:18420"/>
    </ligand>
</feature>
<feature type="modified residue" description="N6-carboxylysine" evidence="1">
    <location>
        <position position="121"/>
    </location>
</feature>
<gene>
    <name evidence="1" type="primary">ilvD</name>
    <name type="ordered locus">Desal_3776</name>
</gene>
<dbReference type="EC" id="4.2.1.9" evidence="1"/>
<dbReference type="EMBL" id="CP001649">
    <property type="protein sequence ID" value="ACS81821.1"/>
    <property type="molecule type" value="Genomic_DNA"/>
</dbReference>
<dbReference type="RefSeq" id="WP_015853637.1">
    <property type="nucleotide sequence ID" value="NC_012881.1"/>
</dbReference>
<dbReference type="SMR" id="C6BUM7"/>
<dbReference type="STRING" id="526222.Desal_3776"/>
<dbReference type="KEGG" id="dsa:Desal_3776"/>
<dbReference type="eggNOG" id="COG0129">
    <property type="taxonomic scope" value="Bacteria"/>
</dbReference>
<dbReference type="HOGENOM" id="CLU_014271_4_2_7"/>
<dbReference type="OrthoDB" id="9807077at2"/>
<dbReference type="UniPathway" id="UPA00047">
    <property type="reaction ID" value="UER00057"/>
</dbReference>
<dbReference type="UniPathway" id="UPA00049">
    <property type="reaction ID" value="UER00061"/>
</dbReference>
<dbReference type="Proteomes" id="UP000002601">
    <property type="component" value="Chromosome"/>
</dbReference>
<dbReference type="GO" id="GO:0005829">
    <property type="term" value="C:cytosol"/>
    <property type="evidence" value="ECO:0007669"/>
    <property type="project" value="TreeGrafter"/>
</dbReference>
<dbReference type="GO" id="GO:0051537">
    <property type="term" value="F:2 iron, 2 sulfur cluster binding"/>
    <property type="evidence" value="ECO:0007669"/>
    <property type="project" value="UniProtKB-UniRule"/>
</dbReference>
<dbReference type="GO" id="GO:0004160">
    <property type="term" value="F:dihydroxy-acid dehydratase activity"/>
    <property type="evidence" value="ECO:0007669"/>
    <property type="project" value="UniProtKB-UniRule"/>
</dbReference>
<dbReference type="GO" id="GO:0000287">
    <property type="term" value="F:magnesium ion binding"/>
    <property type="evidence" value="ECO:0007669"/>
    <property type="project" value="UniProtKB-UniRule"/>
</dbReference>
<dbReference type="GO" id="GO:0009097">
    <property type="term" value="P:isoleucine biosynthetic process"/>
    <property type="evidence" value="ECO:0007669"/>
    <property type="project" value="UniProtKB-UniRule"/>
</dbReference>
<dbReference type="GO" id="GO:0009099">
    <property type="term" value="P:L-valine biosynthetic process"/>
    <property type="evidence" value="ECO:0007669"/>
    <property type="project" value="UniProtKB-UniRule"/>
</dbReference>
<dbReference type="FunFam" id="3.50.30.80:FF:000001">
    <property type="entry name" value="Dihydroxy-acid dehydratase"/>
    <property type="match status" value="1"/>
</dbReference>
<dbReference type="Gene3D" id="3.50.30.80">
    <property type="entry name" value="IlvD/EDD C-terminal domain-like"/>
    <property type="match status" value="1"/>
</dbReference>
<dbReference type="HAMAP" id="MF_00012">
    <property type="entry name" value="IlvD"/>
    <property type="match status" value="1"/>
</dbReference>
<dbReference type="InterPro" id="IPR042096">
    <property type="entry name" value="Dihydro-acid_dehy_C"/>
</dbReference>
<dbReference type="InterPro" id="IPR004404">
    <property type="entry name" value="DihydroxyA_deHydtase"/>
</dbReference>
<dbReference type="InterPro" id="IPR020558">
    <property type="entry name" value="DiOHA_6PGluconate_deHydtase_CS"/>
</dbReference>
<dbReference type="InterPro" id="IPR056740">
    <property type="entry name" value="ILV_EDD_C"/>
</dbReference>
<dbReference type="InterPro" id="IPR000581">
    <property type="entry name" value="ILV_EDD_N"/>
</dbReference>
<dbReference type="InterPro" id="IPR037237">
    <property type="entry name" value="IlvD/EDD_N"/>
</dbReference>
<dbReference type="NCBIfam" id="TIGR00110">
    <property type="entry name" value="ilvD"/>
    <property type="match status" value="1"/>
</dbReference>
<dbReference type="NCBIfam" id="NF002068">
    <property type="entry name" value="PRK00911.1"/>
    <property type="match status" value="1"/>
</dbReference>
<dbReference type="PANTHER" id="PTHR43661">
    <property type="entry name" value="D-XYLONATE DEHYDRATASE"/>
    <property type="match status" value="1"/>
</dbReference>
<dbReference type="PANTHER" id="PTHR43661:SF3">
    <property type="entry name" value="D-XYLONATE DEHYDRATASE YAGF-RELATED"/>
    <property type="match status" value="1"/>
</dbReference>
<dbReference type="Pfam" id="PF24877">
    <property type="entry name" value="ILV_EDD_C"/>
    <property type="match status" value="1"/>
</dbReference>
<dbReference type="Pfam" id="PF00920">
    <property type="entry name" value="ILVD_EDD_N"/>
    <property type="match status" value="1"/>
</dbReference>
<dbReference type="SUPFAM" id="SSF143975">
    <property type="entry name" value="IlvD/EDD N-terminal domain-like"/>
    <property type="match status" value="1"/>
</dbReference>
<dbReference type="SUPFAM" id="SSF52016">
    <property type="entry name" value="LeuD/IlvD-like"/>
    <property type="match status" value="1"/>
</dbReference>
<dbReference type="PROSITE" id="PS00886">
    <property type="entry name" value="ILVD_EDD_1"/>
    <property type="match status" value="1"/>
</dbReference>
<dbReference type="PROSITE" id="PS00887">
    <property type="entry name" value="ILVD_EDD_2"/>
    <property type="match status" value="1"/>
</dbReference>
<name>ILVD_MARSD</name>
<protein>
    <recommendedName>
        <fullName evidence="1">Dihydroxy-acid dehydratase</fullName>
        <shortName evidence="1">DAD</shortName>
        <ecNumber evidence="1">4.2.1.9</ecNumber>
    </recommendedName>
</protein>
<proteinExistence type="inferred from homology"/>
<evidence type="ECO:0000255" key="1">
    <source>
        <dbReference type="HAMAP-Rule" id="MF_00012"/>
    </source>
</evidence>
<sequence length="555" mass="58548">MRSKKMTGGLEKAPHRSLLYALGLSKDEVNRPLIGICNAANEIIPGHVHLHTITRAVKDGVRLAGGVPMEFPAIGVCDGLAMNHTGMRYSLPSREIIADSIEIMATAHPFDALVLIPNCDKIVPGMLMAALRLNIPTIVISGGPMLAGRKDGKKVDLITVFEGVGQVKTGNMTEDELTVLEQSACPTCGSCSGMFTANSMNCLSETIGLALPGNGTIPAVMAERTRLAKAAGSQIMTLLEKDIKPRDIVTEKSLKNAVTMDMALGCSTNTVLHLPAIFNEAGLKLDLTVFDEISRNTPNLCKLSPAGPDHIEDLNAAGGIQGVMAELSKTGRIELDPMTVTGKTVGENLKELNAGVKDHKIVRPVDDPYSTEGGIAVLFGNIAEDGCVVKQSAVAPEMMKRTCNAKVFNSEEEAVEAILGNQIVKGDAVVILYEGPKGGPGMREMLTPTSAIAGMGLGADVALITDGRFSGGTRGAAIGHVSPEAASGGAIGLVQTGDVIEIDIPGRSINVKLDEAEMEKRRAEFKPIEKEMPSAFLKRYSQNVTSASTGAIYKK</sequence>
<organism>
    <name type="scientific">Maridesulfovibrio salexigens (strain ATCC 14822 / DSM 2638 / NCIMB 8403 / VKM B-1763)</name>
    <name type="common">Desulfovibrio salexigens</name>
    <dbReference type="NCBI Taxonomy" id="526222"/>
    <lineage>
        <taxon>Bacteria</taxon>
        <taxon>Pseudomonadati</taxon>
        <taxon>Thermodesulfobacteriota</taxon>
        <taxon>Desulfovibrionia</taxon>
        <taxon>Desulfovibrionales</taxon>
        <taxon>Desulfovibrionaceae</taxon>
        <taxon>Maridesulfovibrio</taxon>
    </lineage>
</organism>
<accession>C6BUM7</accession>